<name>RUVC_AERS4</name>
<accession>A4SKG7</accession>
<feature type="chain" id="PRO_1000002711" description="Crossover junction endodeoxyribonuclease RuvC">
    <location>
        <begin position="1"/>
        <end position="173"/>
    </location>
</feature>
<feature type="active site" evidence="1">
    <location>
        <position position="8"/>
    </location>
</feature>
<feature type="active site" evidence="1">
    <location>
        <position position="67"/>
    </location>
</feature>
<feature type="active site" evidence="1">
    <location>
        <position position="139"/>
    </location>
</feature>
<feature type="binding site" evidence="1">
    <location>
        <position position="8"/>
    </location>
    <ligand>
        <name>Mg(2+)</name>
        <dbReference type="ChEBI" id="CHEBI:18420"/>
        <label>1</label>
    </ligand>
</feature>
<feature type="binding site" evidence="1">
    <location>
        <position position="67"/>
    </location>
    <ligand>
        <name>Mg(2+)</name>
        <dbReference type="ChEBI" id="CHEBI:18420"/>
        <label>2</label>
    </ligand>
</feature>
<feature type="binding site" evidence="1">
    <location>
        <position position="139"/>
    </location>
    <ligand>
        <name>Mg(2+)</name>
        <dbReference type="ChEBI" id="CHEBI:18420"/>
        <label>1</label>
    </ligand>
</feature>
<comment type="function">
    <text evidence="1">The RuvA-RuvB-RuvC complex processes Holliday junction (HJ) DNA during genetic recombination and DNA repair. Endonuclease that resolves HJ intermediates. Cleaves cruciform DNA by making single-stranded nicks across the HJ at symmetrical positions within the homologous arms, yielding a 5'-phosphate and a 3'-hydroxyl group; requires a central core of homology in the junction. The consensus cleavage sequence is 5'-(A/T)TT(C/G)-3'. Cleavage occurs on the 3'-side of the TT dinucleotide at the point of strand exchange. HJ branch migration catalyzed by RuvA-RuvB allows RuvC to scan DNA until it finds its consensus sequence, where it cleaves and resolves the cruciform DNA.</text>
</comment>
<comment type="catalytic activity">
    <reaction evidence="1">
        <text>Endonucleolytic cleavage at a junction such as a reciprocal single-stranded crossover between two homologous DNA duplexes (Holliday junction).</text>
        <dbReference type="EC" id="3.1.21.10"/>
    </reaction>
</comment>
<comment type="cofactor">
    <cofactor evidence="1">
        <name>Mg(2+)</name>
        <dbReference type="ChEBI" id="CHEBI:18420"/>
    </cofactor>
    <text evidence="1">Binds 2 Mg(2+) ion per subunit.</text>
</comment>
<comment type="subunit">
    <text evidence="1">Homodimer which binds Holliday junction (HJ) DNA. The HJ becomes 2-fold symmetrical on binding to RuvC with unstacked arms; it has a different conformation from HJ DNA in complex with RuvA. In the full resolvosome a probable DNA-RuvA(4)-RuvB(12)-RuvC(2) complex forms which resolves the HJ.</text>
</comment>
<comment type="subcellular location">
    <subcellularLocation>
        <location evidence="1">Cytoplasm</location>
    </subcellularLocation>
</comment>
<comment type="similarity">
    <text evidence="1">Belongs to the RuvC family.</text>
</comment>
<protein>
    <recommendedName>
        <fullName evidence="1">Crossover junction endodeoxyribonuclease RuvC</fullName>
        <ecNumber evidence="1">3.1.21.10</ecNumber>
    </recommendedName>
    <alternativeName>
        <fullName evidence="1">Holliday junction nuclease RuvC</fullName>
    </alternativeName>
    <alternativeName>
        <fullName evidence="1">Holliday junction resolvase RuvC</fullName>
    </alternativeName>
</protein>
<proteinExistence type="inferred from homology"/>
<reference key="1">
    <citation type="journal article" date="2008" name="BMC Genomics">
        <title>The genome of Aeromonas salmonicida subsp. salmonicida A449: insights into the evolution of a fish pathogen.</title>
        <authorList>
            <person name="Reith M.E."/>
            <person name="Singh R.K."/>
            <person name="Curtis B."/>
            <person name="Boyd J.M."/>
            <person name="Bouevitch A."/>
            <person name="Kimball J."/>
            <person name="Munholland J."/>
            <person name="Murphy C."/>
            <person name="Sarty D."/>
            <person name="Williams J."/>
            <person name="Nash J.H."/>
            <person name="Johnson S.C."/>
            <person name="Brown L.L."/>
        </authorList>
    </citation>
    <scope>NUCLEOTIDE SEQUENCE [LARGE SCALE GENOMIC DNA]</scope>
    <source>
        <strain>A449</strain>
    </source>
</reference>
<sequence>MSIILGIDPGSRITGYGVIRIVAGKAEYLGSGCIRTDFGELPSRLKQVYDGVSEIITQFKPDEFAIERVFMARNADSALKLGQARGSAIVAAVNALLPVSEYSATQIKQAVVGTGGAAKEQVQHMVTHLLKLSATPQADAADALGVAICHFHTRQSLIKMAGRATSSVRGRYR</sequence>
<organism>
    <name type="scientific">Aeromonas salmonicida (strain A449)</name>
    <dbReference type="NCBI Taxonomy" id="382245"/>
    <lineage>
        <taxon>Bacteria</taxon>
        <taxon>Pseudomonadati</taxon>
        <taxon>Pseudomonadota</taxon>
        <taxon>Gammaproteobacteria</taxon>
        <taxon>Aeromonadales</taxon>
        <taxon>Aeromonadaceae</taxon>
        <taxon>Aeromonas</taxon>
    </lineage>
</organism>
<keyword id="KW-0963">Cytoplasm</keyword>
<keyword id="KW-0227">DNA damage</keyword>
<keyword id="KW-0233">DNA recombination</keyword>
<keyword id="KW-0234">DNA repair</keyword>
<keyword id="KW-0238">DNA-binding</keyword>
<keyword id="KW-0255">Endonuclease</keyword>
<keyword id="KW-0378">Hydrolase</keyword>
<keyword id="KW-0460">Magnesium</keyword>
<keyword id="KW-0479">Metal-binding</keyword>
<keyword id="KW-0540">Nuclease</keyword>
<dbReference type="EC" id="3.1.21.10" evidence="1"/>
<dbReference type="EMBL" id="CP000644">
    <property type="protein sequence ID" value="ABO89389.1"/>
    <property type="molecule type" value="Genomic_DNA"/>
</dbReference>
<dbReference type="RefSeq" id="WP_005316784.1">
    <property type="nucleotide sequence ID" value="NC_009348.1"/>
</dbReference>
<dbReference type="SMR" id="A4SKG7"/>
<dbReference type="STRING" id="29491.GCA_000820065_01115"/>
<dbReference type="KEGG" id="asa:ASA_1283"/>
<dbReference type="PATRIC" id="fig|382245.13.peg.1282"/>
<dbReference type="eggNOG" id="COG0817">
    <property type="taxonomic scope" value="Bacteria"/>
</dbReference>
<dbReference type="HOGENOM" id="CLU_091257_2_1_6"/>
<dbReference type="Proteomes" id="UP000000225">
    <property type="component" value="Chromosome"/>
</dbReference>
<dbReference type="GO" id="GO:0005737">
    <property type="term" value="C:cytoplasm"/>
    <property type="evidence" value="ECO:0007669"/>
    <property type="project" value="UniProtKB-SubCell"/>
</dbReference>
<dbReference type="GO" id="GO:0048476">
    <property type="term" value="C:Holliday junction resolvase complex"/>
    <property type="evidence" value="ECO:0007669"/>
    <property type="project" value="UniProtKB-UniRule"/>
</dbReference>
<dbReference type="GO" id="GO:0008821">
    <property type="term" value="F:crossover junction DNA endonuclease activity"/>
    <property type="evidence" value="ECO:0007669"/>
    <property type="project" value="UniProtKB-UniRule"/>
</dbReference>
<dbReference type="GO" id="GO:0003677">
    <property type="term" value="F:DNA binding"/>
    <property type="evidence" value="ECO:0007669"/>
    <property type="project" value="UniProtKB-KW"/>
</dbReference>
<dbReference type="GO" id="GO:0000287">
    <property type="term" value="F:magnesium ion binding"/>
    <property type="evidence" value="ECO:0007669"/>
    <property type="project" value="UniProtKB-UniRule"/>
</dbReference>
<dbReference type="GO" id="GO:0006310">
    <property type="term" value="P:DNA recombination"/>
    <property type="evidence" value="ECO:0007669"/>
    <property type="project" value="UniProtKB-UniRule"/>
</dbReference>
<dbReference type="GO" id="GO:0006281">
    <property type="term" value="P:DNA repair"/>
    <property type="evidence" value="ECO:0007669"/>
    <property type="project" value="UniProtKB-UniRule"/>
</dbReference>
<dbReference type="CDD" id="cd16962">
    <property type="entry name" value="RuvC"/>
    <property type="match status" value="1"/>
</dbReference>
<dbReference type="FunFam" id="3.30.420.10:FF:000002">
    <property type="entry name" value="Crossover junction endodeoxyribonuclease RuvC"/>
    <property type="match status" value="1"/>
</dbReference>
<dbReference type="Gene3D" id="3.30.420.10">
    <property type="entry name" value="Ribonuclease H-like superfamily/Ribonuclease H"/>
    <property type="match status" value="1"/>
</dbReference>
<dbReference type="HAMAP" id="MF_00034">
    <property type="entry name" value="RuvC"/>
    <property type="match status" value="1"/>
</dbReference>
<dbReference type="InterPro" id="IPR012337">
    <property type="entry name" value="RNaseH-like_sf"/>
</dbReference>
<dbReference type="InterPro" id="IPR036397">
    <property type="entry name" value="RNaseH_sf"/>
</dbReference>
<dbReference type="InterPro" id="IPR020563">
    <property type="entry name" value="X-over_junc_endoDNase_Mg_BS"/>
</dbReference>
<dbReference type="InterPro" id="IPR002176">
    <property type="entry name" value="X-over_junc_endoDNase_RuvC"/>
</dbReference>
<dbReference type="NCBIfam" id="TIGR00228">
    <property type="entry name" value="ruvC"/>
    <property type="match status" value="1"/>
</dbReference>
<dbReference type="PANTHER" id="PTHR30194">
    <property type="entry name" value="CROSSOVER JUNCTION ENDODEOXYRIBONUCLEASE RUVC"/>
    <property type="match status" value="1"/>
</dbReference>
<dbReference type="PANTHER" id="PTHR30194:SF3">
    <property type="entry name" value="CROSSOVER JUNCTION ENDODEOXYRIBONUCLEASE RUVC"/>
    <property type="match status" value="1"/>
</dbReference>
<dbReference type="Pfam" id="PF02075">
    <property type="entry name" value="RuvC"/>
    <property type="match status" value="1"/>
</dbReference>
<dbReference type="PRINTS" id="PR00696">
    <property type="entry name" value="RSOLVASERUVC"/>
</dbReference>
<dbReference type="SUPFAM" id="SSF53098">
    <property type="entry name" value="Ribonuclease H-like"/>
    <property type="match status" value="1"/>
</dbReference>
<dbReference type="PROSITE" id="PS01321">
    <property type="entry name" value="RUVC"/>
    <property type="match status" value="1"/>
</dbReference>
<evidence type="ECO:0000255" key="1">
    <source>
        <dbReference type="HAMAP-Rule" id="MF_00034"/>
    </source>
</evidence>
<gene>
    <name evidence="1" type="primary">ruvC</name>
    <name type="ordered locus">ASA_1283</name>
</gene>